<reference key="1">
    <citation type="journal article" date="1996" name="Proc. Natl. Acad. Sci. U.S.A.">
        <title>Developmental signal transduction pathways uncovered by genetic suppressors.</title>
        <authorList>
            <person name="Shaulsky G."/>
            <person name="Escalante R."/>
            <person name="Loomis W.F."/>
        </authorList>
    </citation>
    <scope>NUCLEOTIDE SEQUENCE [GENOMIC DNA]</scope>
    <source>
        <strain>AX4</strain>
    </source>
</reference>
<reference key="2">
    <citation type="journal article" date="2005" name="Nature">
        <title>The genome of the social amoeba Dictyostelium discoideum.</title>
        <authorList>
            <person name="Eichinger L."/>
            <person name="Pachebat J.A."/>
            <person name="Gloeckner G."/>
            <person name="Rajandream M.A."/>
            <person name="Sucgang R."/>
            <person name="Berriman M."/>
            <person name="Song J."/>
            <person name="Olsen R."/>
            <person name="Szafranski K."/>
            <person name="Xu Q."/>
            <person name="Tunggal B."/>
            <person name="Kummerfeld S."/>
            <person name="Madera M."/>
            <person name="Konfortov B.A."/>
            <person name="Rivero F."/>
            <person name="Bankier A.T."/>
            <person name="Lehmann R."/>
            <person name="Hamlin N."/>
            <person name="Davies R."/>
            <person name="Gaudet P."/>
            <person name="Fey P."/>
            <person name="Pilcher K."/>
            <person name="Chen G."/>
            <person name="Saunders D."/>
            <person name="Sodergren E.J."/>
            <person name="Davis P."/>
            <person name="Kerhornou A."/>
            <person name="Nie X."/>
            <person name="Hall N."/>
            <person name="Anjard C."/>
            <person name="Hemphill L."/>
            <person name="Bason N."/>
            <person name="Farbrother P."/>
            <person name="Desany B."/>
            <person name="Just E."/>
            <person name="Morio T."/>
            <person name="Rost R."/>
            <person name="Churcher C.M."/>
            <person name="Cooper J."/>
            <person name="Haydock S."/>
            <person name="van Driessche N."/>
            <person name="Cronin A."/>
            <person name="Goodhead I."/>
            <person name="Muzny D.M."/>
            <person name="Mourier T."/>
            <person name="Pain A."/>
            <person name="Lu M."/>
            <person name="Harper D."/>
            <person name="Lindsay R."/>
            <person name="Hauser H."/>
            <person name="James K.D."/>
            <person name="Quiles M."/>
            <person name="Madan Babu M."/>
            <person name="Saito T."/>
            <person name="Buchrieser C."/>
            <person name="Wardroper A."/>
            <person name="Felder M."/>
            <person name="Thangavelu M."/>
            <person name="Johnson D."/>
            <person name="Knights A."/>
            <person name="Loulseged H."/>
            <person name="Mungall K.L."/>
            <person name="Oliver K."/>
            <person name="Price C."/>
            <person name="Quail M.A."/>
            <person name="Urushihara H."/>
            <person name="Hernandez J."/>
            <person name="Rabbinowitsch E."/>
            <person name="Steffen D."/>
            <person name="Sanders M."/>
            <person name="Ma J."/>
            <person name="Kohara Y."/>
            <person name="Sharp S."/>
            <person name="Simmonds M.N."/>
            <person name="Spiegler S."/>
            <person name="Tivey A."/>
            <person name="Sugano S."/>
            <person name="White B."/>
            <person name="Walker D."/>
            <person name="Woodward J.R."/>
            <person name="Winckler T."/>
            <person name="Tanaka Y."/>
            <person name="Shaulsky G."/>
            <person name="Schleicher M."/>
            <person name="Weinstock G.M."/>
            <person name="Rosenthal A."/>
            <person name="Cox E.C."/>
            <person name="Chisholm R.L."/>
            <person name="Gibbs R.A."/>
            <person name="Loomis W.F."/>
            <person name="Platzer M."/>
            <person name="Kay R.R."/>
            <person name="Williams J.G."/>
            <person name="Dear P.H."/>
            <person name="Noegel A.A."/>
            <person name="Barrell B.G."/>
            <person name="Kuspa A."/>
        </authorList>
    </citation>
    <scope>NUCLEOTIDE SEQUENCE [LARGE SCALE GENOMIC DNA]</scope>
    <source>
        <strain>AX4</strain>
    </source>
</reference>
<sequence length="248" mass="27988">MYRNQYDSDITTFSPSGRIHQIEYAMEAVKQGGAAVALKSKQFAVLVSLKRSSSELGSYQKKIFVVDDHVGIAISGLTADARMLCNYMRNECSNYNYVYESQMRVERLVTKVADKHQVHTQRYGRRPYGVGLLVAGYDQLGAHIYQTCPSGNFYDYKSISIGSRSQSAKTYLEKHFESFEECTLEQLITHGLRALRETIPNTDDTLNSKNVSIGIVGEGQPFKIIEEADAQPYLNLLENEEPVEMQTN</sequence>
<organism>
    <name type="scientific">Dictyostelium discoideum</name>
    <name type="common">Social amoeba</name>
    <dbReference type="NCBI Taxonomy" id="44689"/>
    <lineage>
        <taxon>Eukaryota</taxon>
        <taxon>Amoebozoa</taxon>
        <taxon>Evosea</taxon>
        <taxon>Eumycetozoa</taxon>
        <taxon>Dictyostelia</taxon>
        <taxon>Dictyosteliales</taxon>
        <taxon>Dictyosteliaceae</taxon>
        <taxon>Dictyostelium</taxon>
    </lineage>
</organism>
<keyword id="KW-0963">Cytoplasm</keyword>
<keyword id="KW-0539">Nucleus</keyword>
<keyword id="KW-0647">Proteasome</keyword>
<keyword id="KW-1185">Reference proteome</keyword>
<protein>
    <recommendedName>
        <fullName>Proteasome subunit alpha type-1</fullName>
    </recommendedName>
    <alternativeName>
        <fullName>Proteasome subunit C2</fullName>
    </alternativeName>
</protein>
<gene>
    <name type="primary">psmA1</name>
    <name type="synonym">prtC</name>
    <name type="ORF">DDB_G0282363</name>
</gene>
<comment type="function">
    <text>The proteasome is a multicatalytic proteinase complex which is characterized by its ability to cleave peptides with Arg, Phe, Tyr, Leu, and Glu adjacent to the leaving group at neutral or slightly basic pH. The proteasome has an ATP-dependent proteolytic activity.</text>
</comment>
<comment type="subunit">
    <text evidence="1">The 26S proteasome consists of a 20S proteasome core and two 19S regulatory subunits. The 20S proteasome core is composed of 28 subunits that are arranged in four stacked rings, resulting in a barrel-shaped structure. The two end rings are each formed by seven alpha subunits, and the two central rings are each formed by seven beta subunits. The catalytic chamber with the active sites is on the inside of the barrel (By similarity).</text>
</comment>
<comment type="subcellular location">
    <subcellularLocation>
        <location evidence="1">Cytoplasm</location>
    </subcellularLocation>
    <subcellularLocation>
        <location evidence="1">Nucleus</location>
    </subcellularLocation>
</comment>
<comment type="similarity">
    <text evidence="2">Belongs to the peptidase T1A family.</text>
</comment>
<evidence type="ECO:0000250" key="1"/>
<evidence type="ECO:0000255" key="2">
    <source>
        <dbReference type="PROSITE-ProRule" id="PRU00808"/>
    </source>
</evidence>
<name>PSA1_DICDI</name>
<proteinExistence type="inferred from homology"/>
<feature type="chain" id="PRO_0000124067" description="Proteasome subunit alpha type-1">
    <location>
        <begin position="1"/>
        <end position="248"/>
    </location>
</feature>
<accession>Q27562</accession>
<accession>Q54SK2</accession>
<dbReference type="EMBL" id="U60168">
    <property type="protein sequence ID" value="AAB03506.1"/>
    <property type="molecule type" value="Genomic_DNA"/>
</dbReference>
<dbReference type="EMBL" id="AAFI02000047">
    <property type="protein sequence ID" value="EAL66041.1"/>
    <property type="molecule type" value="Genomic_DNA"/>
</dbReference>
<dbReference type="RefSeq" id="XP_640037.1">
    <property type="nucleotide sequence ID" value="XM_634945.1"/>
</dbReference>
<dbReference type="SMR" id="Q27562"/>
<dbReference type="BioGRID" id="1248566">
    <property type="interactions" value="1"/>
</dbReference>
<dbReference type="FunCoup" id="Q27562">
    <property type="interactions" value="934"/>
</dbReference>
<dbReference type="STRING" id="44689.Q27562"/>
<dbReference type="MEROPS" id="T01.976"/>
<dbReference type="PaxDb" id="44689-DDB0214956"/>
<dbReference type="EnsemblProtists" id="EAL66041">
    <property type="protein sequence ID" value="EAL66041"/>
    <property type="gene ID" value="DDB_G0282363"/>
</dbReference>
<dbReference type="GeneID" id="8623563"/>
<dbReference type="KEGG" id="ddi:DDB_G0282363"/>
<dbReference type="dictyBase" id="DDB_G0282363">
    <property type="gene designation" value="psmA1"/>
</dbReference>
<dbReference type="VEuPathDB" id="AmoebaDB:DDB_G0282363"/>
<dbReference type="eggNOG" id="KOG0863">
    <property type="taxonomic scope" value="Eukaryota"/>
</dbReference>
<dbReference type="HOGENOM" id="CLU_035750_8_0_1"/>
<dbReference type="InParanoid" id="Q27562"/>
<dbReference type="OMA" id="NTQVYGK"/>
<dbReference type="PhylomeDB" id="Q27562"/>
<dbReference type="Reactome" id="R-DDI-1236978">
    <property type="pathway name" value="Cross-presentation of soluble exogenous antigens (endosomes)"/>
</dbReference>
<dbReference type="Reactome" id="R-DDI-174084">
    <property type="pathway name" value="Autodegradation of Cdh1 by Cdh1:APC/C"/>
</dbReference>
<dbReference type="Reactome" id="R-DDI-174154">
    <property type="pathway name" value="APC/C:Cdc20 mediated degradation of Securin"/>
</dbReference>
<dbReference type="Reactome" id="R-DDI-174178">
    <property type="pathway name" value="APC/C:Cdh1 mediated degradation of Cdc20 and other APC/C:Cdh1 targeted proteins in late mitosis/early G1"/>
</dbReference>
<dbReference type="Reactome" id="R-DDI-2467813">
    <property type="pathway name" value="Separation of Sister Chromatids"/>
</dbReference>
<dbReference type="Reactome" id="R-DDI-349425">
    <property type="pathway name" value="Autodegradation of the E3 ubiquitin ligase COP1"/>
</dbReference>
<dbReference type="Reactome" id="R-DDI-382556">
    <property type="pathway name" value="ABC-family proteins mediated transport"/>
</dbReference>
<dbReference type="Reactome" id="R-DDI-450408">
    <property type="pathway name" value="AUF1 (hnRNP D0) binds and destabilizes mRNA"/>
</dbReference>
<dbReference type="Reactome" id="R-DDI-4641258">
    <property type="pathway name" value="Degradation of DVL"/>
</dbReference>
<dbReference type="Reactome" id="R-DDI-5632684">
    <property type="pathway name" value="Hedgehog 'on' state"/>
</dbReference>
<dbReference type="Reactome" id="R-DDI-5658442">
    <property type="pathway name" value="Regulation of RAS by GAPs"/>
</dbReference>
<dbReference type="Reactome" id="R-DDI-5687128">
    <property type="pathway name" value="MAPK6/MAPK4 signaling"/>
</dbReference>
<dbReference type="Reactome" id="R-DDI-5689603">
    <property type="pathway name" value="UCH proteinases"/>
</dbReference>
<dbReference type="Reactome" id="R-DDI-5689880">
    <property type="pathway name" value="Ub-specific processing proteases"/>
</dbReference>
<dbReference type="Reactome" id="R-DDI-68949">
    <property type="pathway name" value="Orc1 removal from chromatin"/>
</dbReference>
<dbReference type="Reactome" id="R-DDI-69017">
    <property type="pathway name" value="CDK-mediated phosphorylation and removal of Cdc6"/>
</dbReference>
<dbReference type="Reactome" id="R-DDI-69601">
    <property type="pathway name" value="Ubiquitin Mediated Degradation of Phosphorylated Cdc25A"/>
</dbReference>
<dbReference type="Reactome" id="R-DDI-8854050">
    <property type="pathway name" value="FBXL7 down-regulates AURKA during mitotic entry and in early mitosis"/>
</dbReference>
<dbReference type="Reactome" id="R-DDI-8948751">
    <property type="pathway name" value="Regulation of PTEN stability and activity"/>
</dbReference>
<dbReference type="Reactome" id="R-DDI-8951664">
    <property type="pathway name" value="Neddylation"/>
</dbReference>
<dbReference type="Reactome" id="R-DDI-9755511">
    <property type="pathway name" value="KEAP1-NFE2L2 pathway"/>
</dbReference>
<dbReference type="Reactome" id="R-DDI-983168">
    <property type="pathway name" value="Antigen processing: Ubiquitination &amp; Proteasome degradation"/>
</dbReference>
<dbReference type="Reactome" id="R-DDI-9907900">
    <property type="pathway name" value="Proteasome assembly"/>
</dbReference>
<dbReference type="PRO" id="PR:Q27562"/>
<dbReference type="Proteomes" id="UP000002195">
    <property type="component" value="Chromosome 3"/>
</dbReference>
<dbReference type="GO" id="GO:0005737">
    <property type="term" value="C:cytoplasm"/>
    <property type="evidence" value="ECO:0000353"/>
    <property type="project" value="dictyBase"/>
</dbReference>
<dbReference type="GO" id="GO:0005634">
    <property type="term" value="C:nucleus"/>
    <property type="evidence" value="ECO:0000353"/>
    <property type="project" value="dictyBase"/>
</dbReference>
<dbReference type="GO" id="GO:0045335">
    <property type="term" value="C:phagocytic vesicle"/>
    <property type="evidence" value="ECO:0007005"/>
    <property type="project" value="dictyBase"/>
</dbReference>
<dbReference type="GO" id="GO:0019773">
    <property type="term" value="C:proteasome core complex, alpha-subunit complex"/>
    <property type="evidence" value="ECO:0000314"/>
    <property type="project" value="dictyBase"/>
</dbReference>
<dbReference type="GO" id="GO:0010498">
    <property type="term" value="P:proteasomal protein catabolic process"/>
    <property type="evidence" value="ECO:0000314"/>
    <property type="project" value="dictyBase"/>
</dbReference>
<dbReference type="GO" id="GO:0043161">
    <property type="term" value="P:proteasome-mediated ubiquitin-dependent protein catabolic process"/>
    <property type="evidence" value="ECO:0000318"/>
    <property type="project" value="GO_Central"/>
</dbReference>
<dbReference type="GO" id="GO:0006511">
    <property type="term" value="P:ubiquitin-dependent protein catabolic process"/>
    <property type="evidence" value="ECO:0000250"/>
    <property type="project" value="dictyBase"/>
</dbReference>
<dbReference type="CDD" id="cd03749">
    <property type="entry name" value="proteasome_alpha_type_1"/>
    <property type="match status" value="1"/>
</dbReference>
<dbReference type="FunFam" id="3.60.20.10:FF:000016">
    <property type="entry name" value="Proteasome subunit alpha type-6"/>
    <property type="match status" value="1"/>
</dbReference>
<dbReference type="Gene3D" id="3.60.20.10">
    <property type="entry name" value="Glutamine Phosphoribosylpyrophosphate, subunit 1, domain 1"/>
    <property type="match status" value="1"/>
</dbReference>
<dbReference type="InterPro" id="IPR029055">
    <property type="entry name" value="Ntn_hydrolases_N"/>
</dbReference>
<dbReference type="InterPro" id="IPR050115">
    <property type="entry name" value="Proteasome_alpha"/>
</dbReference>
<dbReference type="InterPro" id="IPR023332">
    <property type="entry name" value="Proteasome_alpha-type"/>
</dbReference>
<dbReference type="InterPro" id="IPR035144">
    <property type="entry name" value="Proteasome_alpha1"/>
</dbReference>
<dbReference type="InterPro" id="IPR000426">
    <property type="entry name" value="Proteasome_asu_N"/>
</dbReference>
<dbReference type="InterPro" id="IPR001353">
    <property type="entry name" value="Proteasome_sua/b"/>
</dbReference>
<dbReference type="PANTHER" id="PTHR11599">
    <property type="entry name" value="PROTEASOME SUBUNIT ALPHA/BETA"/>
    <property type="match status" value="1"/>
</dbReference>
<dbReference type="Pfam" id="PF00227">
    <property type="entry name" value="Proteasome"/>
    <property type="match status" value="1"/>
</dbReference>
<dbReference type="Pfam" id="PF10584">
    <property type="entry name" value="Proteasome_A_N"/>
    <property type="match status" value="1"/>
</dbReference>
<dbReference type="SMART" id="SM00948">
    <property type="entry name" value="Proteasome_A_N"/>
    <property type="match status" value="1"/>
</dbReference>
<dbReference type="SUPFAM" id="SSF56235">
    <property type="entry name" value="N-terminal nucleophile aminohydrolases (Ntn hydrolases)"/>
    <property type="match status" value="1"/>
</dbReference>
<dbReference type="PROSITE" id="PS00388">
    <property type="entry name" value="PROTEASOME_ALPHA_1"/>
    <property type="match status" value="1"/>
</dbReference>
<dbReference type="PROSITE" id="PS51475">
    <property type="entry name" value="PROTEASOME_ALPHA_2"/>
    <property type="match status" value="1"/>
</dbReference>